<gene>
    <name type="primary">SWP32</name>
    <name type="synonym">HSWP3</name>
</gene>
<proteinExistence type="evidence at protein level"/>
<protein>
    <recommendedName>
        <fullName>Spore wall protein 30</fullName>
    </recommendedName>
</protein>
<feature type="signal peptide" evidence="2">
    <location>
        <begin position="1"/>
        <end position="18"/>
    </location>
</feature>
<feature type="chain" id="PRO_0000385183" description="Spore wall protein 30">
    <location>
        <begin position="19"/>
        <end position="316"/>
    </location>
</feature>
<feature type="glycosylation site" description="N-linked (GlcNAc...) asparagine" evidence="1">
    <location>
        <position position="19"/>
    </location>
</feature>
<feature type="glycosylation site" description="N-linked (GlcNAc...) asparagine" evidence="1">
    <location>
        <position position="251"/>
    </location>
</feature>
<comment type="subcellular location">
    <subcellularLocation>
        <location evidence="2">Spore</location>
        <location evidence="2">Perispore</location>
    </subcellularLocation>
</comment>
<comment type="developmental stage">
    <text evidence="2">Synthesized during sporogony.</text>
</comment>
<sequence length="316" mass="37407">MKTSVVILAMSYITSIFANNSYDFCDGEFAISEKDDKCGFSFNPCTLYKQIQKEYSNCVILRFYLKAISNMLESICDNNKRCLPFSIDSLYRPLYNREQFKHKHHHTLYALFRNCLYLVNPIYFKEYQDALACNQLDVCYFLIRRTVCPKYGVTKYIECLKKRCEDRFDEKELAIFICDSETFVNIKLEIDACRKICPADCTLDICKIYSLDFWERRDLLKAIFDYHYCHVLSSDNTRDEIIKKIEEIYLNGTERDIKFTSFIIYQLFTDLVACKSSDKNIKRILDLICLYEKKDKCPSGVMVMIEFFVKVCSYQC</sequence>
<keyword id="KW-0903">Direct protein sequencing</keyword>
<keyword id="KW-0325">Glycoprotein</keyword>
<keyword id="KW-0732">Signal</keyword>
<keyword id="KW-0749">Sporulation</keyword>
<evidence type="ECO:0000255" key="1"/>
<evidence type="ECO:0000269" key="2">
    <source>
    </source>
</evidence>
<organism>
    <name type="scientific">Nosema bombycis (strain CQ1 / CVCC 102059)</name>
    <name type="common">Microsporidian parasite</name>
    <name type="synonym">Pebrine of silkworm</name>
    <dbReference type="NCBI Taxonomy" id="578461"/>
    <lineage>
        <taxon>Eukaryota</taxon>
        <taxon>Fungi</taxon>
        <taxon>Fungi incertae sedis</taxon>
        <taxon>Microsporidia</taxon>
        <taxon>Nosematidae</taxon>
        <taxon>Nosema</taxon>
    </lineage>
</organism>
<reference key="1">
    <citation type="journal article" date="2008" name="Proteomics">
        <title>Proteomic analysis of spore wall proteins and identification of two spore wall proteins from Nosema bombycis (Microsporidia).</title>
        <authorList>
            <person name="Wu Z."/>
            <person name="Li Y."/>
            <person name="Pan G."/>
            <person name="Tan X."/>
            <person name="Hu J."/>
            <person name="Zhou Z."/>
            <person name="Xiang Z."/>
        </authorList>
    </citation>
    <scope>NUCLEOTIDE SEQUENCE [GENOMIC DNA]</scope>
    <scope>PROTEIN SEQUENCE OF 19-37</scope>
    <scope>IDENTIFICATION BY MASS SPECTROMETRY</scope>
    <scope>SUBCELLULAR LOCATION</scope>
    <scope>DEVELOPMENTAL STAGE</scope>
    <source>
        <strain>CQ1 / CVCC 102059</strain>
    </source>
</reference>
<accession>B3STN7</accession>
<dbReference type="EMBL" id="EF683103">
    <property type="protein sequence ID" value="ABV48891.1"/>
    <property type="molecule type" value="Genomic_DNA"/>
</dbReference>
<dbReference type="GlyCosmos" id="B3STN7">
    <property type="glycosylation" value="2 sites, No reported glycans"/>
</dbReference>
<dbReference type="GO" id="GO:0030435">
    <property type="term" value="P:sporulation resulting in formation of a cellular spore"/>
    <property type="evidence" value="ECO:0007669"/>
    <property type="project" value="UniProtKB-KW"/>
</dbReference>
<name>SWP32_NOSB1</name>